<protein>
    <recommendedName>
        <fullName evidence="1">UPF0310 protein Mflv_0785</fullName>
    </recommendedName>
</protein>
<gene>
    <name type="ordered locus">Mflv_0785</name>
</gene>
<comment type="similarity">
    <text evidence="1">Belongs to the UPF0310 family.</text>
</comment>
<proteinExistence type="inferred from homology"/>
<reference key="1">
    <citation type="submission" date="2007-04" db="EMBL/GenBank/DDBJ databases">
        <title>Complete sequence of chromosome of Mycobacterium gilvum PYR-GCK.</title>
        <authorList>
            <consortium name="US DOE Joint Genome Institute"/>
            <person name="Copeland A."/>
            <person name="Lucas S."/>
            <person name="Lapidus A."/>
            <person name="Barry K."/>
            <person name="Detter J.C."/>
            <person name="Glavina del Rio T."/>
            <person name="Hammon N."/>
            <person name="Israni S."/>
            <person name="Dalin E."/>
            <person name="Tice H."/>
            <person name="Pitluck S."/>
            <person name="Chain P."/>
            <person name="Malfatti S."/>
            <person name="Shin M."/>
            <person name="Vergez L."/>
            <person name="Schmutz J."/>
            <person name="Larimer F."/>
            <person name="Land M."/>
            <person name="Hauser L."/>
            <person name="Kyrpides N."/>
            <person name="Mikhailova N."/>
            <person name="Miller C."/>
            <person name="Richardson P."/>
        </authorList>
    </citation>
    <scope>NUCLEOTIDE SEQUENCE [LARGE SCALE GENOMIC DNA]</scope>
    <source>
        <strain>PYR-GCK</strain>
    </source>
</reference>
<name>Y785_MYCGI</name>
<organism>
    <name type="scientific">Mycolicibacterium gilvum (strain PYR-GCK)</name>
    <name type="common">Mycobacterium gilvum (strain PYR-GCK)</name>
    <dbReference type="NCBI Taxonomy" id="350054"/>
    <lineage>
        <taxon>Bacteria</taxon>
        <taxon>Bacillati</taxon>
        <taxon>Actinomycetota</taxon>
        <taxon>Actinomycetes</taxon>
        <taxon>Mycobacteriales</taxon>
        <taxon>Mycobacteriaceae</taxon>
        <taxon>Mycolicibacterium</taxon>
    </lineage>
</organism>
<accession>A4T4Y2</accession>
<feature type="chain" id="PRO_1000083576" description="UPF0310 protein Mflv_0785">
    <location>
        <begin position="1"/>
        <end position="141"/>
    </location>
</feature>
<sequence length="141" mass="16349">MTNWINTVSRDHVERGVRGRFTQANHGKPHMLRKMARGDWIVFYSPKTEHPNGAPLQAFTAIGQVADDEPYQVEITGDFQPWRRNVDFLESVETPIRPLIDSLDFIEDKSRWGYKFRFGVFRIDDHDLDVIRSAMAVDLCA</sequence>
<evidence type="ECO:0000255" key="1">
    <source>
        <dbReference type="HAMAP-Rule" id="MF_00771"/>
    </source>
</evidence>
<dbReference type="EMBL" id="CP000656">
    <property type="protein sequence ID" value="ABP43270.1"/>
    <property type="molecule type" value="Genomic_DNA"/>
</dbReference>
<dbReference type="SMR" id="A4T4Y2"/>
<dbReference type="STRING" id="350054.Mflv_0785"/>
<dbReference type="KEGG" id="mgi:Mflv_0785"/>
<dbReference type="eggNOG" id="COG1673">
    <property type="taxonomic scope" value="Bacteria"/>
</dbReference>
<dbReference type="HOGENOM" id="CLU_117727_0_0_11"/>
<dbReference type="OrthoDB" id="9793567at2"/>
<dbReference type="CDD" id="cd21132">
    <property type="entry name" value="EVE-like"/>
    <property type="match status" value="1"/>
</dbReference>
<dbReference type="Gene3D" id="3.10.590.10">
    <property type="entry name" value="ph1033 like domains"/>
    <property type="match status" value="1"/>
</dbReference>
<dbReference type="HAMAP" id="MF_00771">
    <property type="entry name" value="UPF0310"/>
    <property type="match status" value="1"/>
</dbReference>
<dbReference type="InterPro" id="IPR002740">
    <property type="entry name" value="EVE_domain"/>
</dbReference>
<dbReference type="InterPro" id="IPR015947">
    <property type="entry name" value="PUA-like_sf"/>
</dbReference>
<dbReference type="InterPro" id="IPR022996">
    <property type="entry name" value="UPF0310"/>
</dbReference>
<dbReference type="NCBIfam" id="NF002615">
    <property type="entry name" value="PRK02268.1-1"/>
    <property type="match status" value="1"/>
</dbReference>
<dbReference type="NCBIfam" id="NF002616">
    <property type="entry name" value="PRK02268.1-2"/>
    <property type="match status" value="1"/>
</dbReference>
<dbReference type="Pfam" id="PF01878">
    <property type="entry name" value="EVE"/>
    <property type="match status" value="1"/>
</dbReference>
<dbReference type="SUPFAM" id="SSF88697">
    <property type="entry name" value="PUA domain-like"/>
    <property type="match status" value="1"/>
</dbReference>